<organism>
    <name type="scientific">Escherichia coli (strain K12)</name>
    <dbReference type="NCBI Taxonomy" id="83333"/>
    <lineage>
        <taxon>Bacteria</taxon>
        <taxon>Pseudomonadati</taxon>
        <taxon>Pseudomonadota</taxon>
        <taxon>Gammaproteobacteria</taxon>
        <taxon>Enterobacterales</taxon>
        <taxon>Enterobacteriaceae</taxon>
        <taxon>Escherichia</taxon>
    </lineage>
</organism>
<keyword id="KW-1185">Reference proteome</keyword>
<sequence length="90" mass="10796">MNIYTFDFDEIESQEDFYRDFSQTFGLAKDKVRDLDSLWDVLMNDVLPLPLEIEFVHLGEKTRRRFGALILLFDEAEEELEGHLRFNVRH</sequence>
<evidence type="ECO:0000305" key="1"/>
<reference key="1">
    <citation type="journal article" date="1997" name="Science">
        <title>The complete genome sequence of Escherichia coli K-12.</title>
        <authorList>
            <person name="Blattner F.R."/>
            <person name="Plunkett G. III"/>
            <person name="Bloch C.A."/>
            <person name="Perna N.T."/>
            <person name="Burland V."/>
            <person name="Riley M."/>
            <person name="Collado-Vides J."/>
            <person name="Glasner J.D."/>
            <person name="Rode C.K."/>
            <person name="Mayhew G.F."/>
            <person name="Gregor J."/>
            <person name="Davis N.W."/>
            <person name="Kirkpatrick H.A."/>
            <person name="Goeden M.A."/>
            <person name="Rose D.J."/>
            <person name="Mau B."/>
            <person name="Shao Y."/>
        </authorList>
    </citation>
    <scope>NUCLEOTIDE SEQUENCE [LARGE SCALE GENOMIC DNA]</scope>
    <source>
        <strain>K12 / MG1655 / ATCC 47076</strain>
    </source>
</reference>
<reference key="2">
    <citation type="journal article" date="2006" name="Mol. Syst. Biol.">
        <title>Highly accurate genome sequences of Escherichia coli K-12 strains MG1655 and W3110.</title>
        <authorList>
            <person name="Hayashi K."/>
            <person name="Morooka N."/>
            <person name="Yamamoto Y."/>
            <person name="Fujita K."/>
            <person name="Isono K."/>
            <person name="Choi S."/>
            <person name="Ohtsubo E."/>
            <person name="Baba T."/>
            <person name="Wanner B.L."/>
            <person name="Mori H."/>
            <person name="Horiuchi T."/>
        </authorList>
    </citation>
    <scope>NUCLEOTIDE SEQUENCE [LARGE SCALE GENOMIC DNA]</scope>
    <source>
        <strain>K12 / W3110 / ATCC 27325 / DSM 5911</strain>
    </source>
</reference>
<name>YHCO_ECOLI</name>
<dbReference type="EMBL" id="U18997">
    <property type="protein sequence ID" value="AAA58041.1"/>
    <property type="molecule type" value="Genomic_DNA"/>
</dbReference>
<dbReference type="EMBL" id="U00096">
    <property type="protein sequence ID" value="AAC76271.1"/>
    <property type="molecule type" value="Genomic_DNA"/>
</dbReference>
<dbReference type="EMBL" id="AP009048">
    <property type="protein sequence ID" value="BAE77282.1"/>
    <property type="molecule type" value="Genomic_DNA"/>
</dbReference>
<dbReference type="PIR" id="A65116">
    <property type="entry name" value="A65116"/>
</dbReference>
<dbReference type="RefSeq" id="NP_417706.1">
    <property type="nucleotide sequence ID" value="NC_000913.3"/>
</dbReference>
<dbReference type="RefSeq" id="WP_001029013.1">
    <property type="nucleotide sequence ID" value="NZ_SSZK01000034.1"/>
</dbReference>
<dbReference type="SMR" id="P64616"/>
<dbReference type="BioGRID" id="4263434">
    <property type="interactions" value="19"/>
</dbReference>
<dbReference type="BioGRID" id="852142">
    <property type="interactions" value="4"/>
</dbReference>
<dbReference type="DIP" id="DIP-48199N"/>
<dbReference type="FunCoup" id="P64616">
    <property type="interactions" value="19"/>
</dbReference>
<dbReference type="IntAct" id="P64616">
    <property type="interactions" value="18"/>
</dbReference>
<dbReference type="STRING" id="511145.b3239"/>
<dbReference type="jPOST" id="P64616"/>
<dbReference type="PaxDb" id="511145-b3239"/>
<dbReference type="EnsemblBacteria" id="AAC76271">
    <property type="protein sequence ID" value="AAC76271"/>
    <property type="gene ID" value="b3239"/>
</dbReference>
<dbReference type="GeneID" id="947830"/>
<dbReference type="KEGG" id="ecj:JW3208"/>
<dbReference type="KEGG" id="eco:b3239"/>
<dbReference type="KEGG" id="ecoc:C3026_17620"/>
<dbReference type="PATRIC" id="fig|1411691.4.peg.3489"/>
<dbReference type="EchoBASE" id="EB2672"/>
<dbReference type="eggNOG" id="COG2732">
    <property type="taxonomic scope" value="Bacteria"/>
</dbReference>
<dbReference type="HOGENOM" id="CLU_121832_2_0_6"/>
<dbReference type="InParanoid" id="P64616"/>
<dbReference type="OMA" id="PVEIDFI"/>
<dbReference type="OrthoDB" id="7575400at2"/>
<dbReference type="PhylomeDB" id="P64616"/>
<dbReference type="BioCyc" id="EcoCyc:G7684-MONOMER"/>
<dbReference type="PRO" id="PR:P64616"/>
<dbReference type="Proteomes" id="UP000000625">
    <property type="component" value="Chromosome"/>
</dbReference>
<dbReference type="CDD" id="cd05142">
    <property type="entry name" value="Barstar"/>
    <property type="match status" value="1"/>
</dbReference>
<dbReference type="Gene3D" id="3.30.370.10">
    <property type="entry name" value="Barstar-like"/>
    <property type="match status" value="1"/>
</dbReference>
<dbReference type="InterPro" id="IPR000468">
    <property type="entry name" value="Barstar"/>
</dbReference>
<dbReference type="InterPro" id="IPR035905">
    <property type="entry name" value="Barstar-like_sf"/>
</dbReference>
<dbReference type="Pfam" id="PF01337">
    <property type="entry name" value="Barstar"/>
    <property type="match status" value="1"/>
</dbReference>
<dbReference type="SUPFAM" id="SSF52038">
    <property type="entry name" value="Barstar-related"/>
    <property type="match status" value="1"/>
</dbReference>
<gene>
    <name type="primary">yhcO</name>
    <name type="ordered locus">b3239</name>
    <name type="ordered locus">JW3208</name>
</gene>
<accession>P64616</accession>
<accession>P46480</accession>
<accession>Q2M8X4</accession>
<feature type="chain" id="PRO_0000169489" description="Uncharacterized protein YhcO">
    <location>
        <begin position="1"/>
        <end position="90"/>
    </location>
</feature>
<comment type="similarity">
    <text evidence="1">Belongs to the barstar family.</text>
</comment>
<protein>
    <recommendedName>
        <fullName>Uncharacterized protein YhcO</fullName>
    </recommendedName>
</protein>
<proteinExistence type="inferred from homology"/>